<keyword id="KW-1015">Disulfide bond</keyword>
<keyword id="KW-0528">Neurotoxin</keyword>
<keyword id="KW-0964">Secreted</keyword>
<keyword id="KW-0800">Toxin</keyword>
<name>CUC12_CONCL</name>
<feature type="propeptide" id="PRO_0000414953" evidence="1">
    <location>
        <begin position="1" status="less than"/>
        <end position="21"/>
    </location>
</feature>
<feature type="peptide" id="PRO_5000785209" description="Conotoxin Cal12.1p2">
    <location>
        <begin position="23"/>
        <end position="67"/>
    </location>
</feature>
<feature type="non-terminal residue">
    <location>
        <position position="1"/>
    </location>
</feature>
<organism>
    <name type="scientific">Californiconus californicus</name>
    <name type="common">California cone</name>
    <name type="synonym">Conus californicus</name>
    <dbReference type="NCBI Taxonomy" id="1736779"/>
    <lineage>
        <taxon>Eukaryota</taxon>
        <taxon>Metazoa</taxon>
        <taxon>Spiralia</taxon>
        <taxon>Lophotrochozoa</taxon>
        <taxon>Mollusca</taxon>
        <taxon>Gastropoda</taxon>
        <taxon>Caenogastropoda</taxon>
        <taxon>Neogastropoda</taxon>
        <taxon>Conoidea</taxon>
        <taxon>Conidae</taxon>
        <taxon>Californiconus</taxon>
    </lineage>
</organism>
<evidence type="ECO:0000250" key="1"/>
<reference key="1">
    <citation type="submission" date="2011-03" db="EMBL/GenBank/DDBJ databases">
        <title>Conotoxins of Conus californicus.</title>
        <authorList>
            <person name="Elliger C.A."/>
            <person name="Lebaric Z.N."/>
            <person name="Gilly W.F."/>
        </authorList>
    </citation>
    <scope>NUCLEOTIDE SEQUENCE [MRNA]</scope>
    <source>
        <tissue>Venom duct</tissue>
    </source>
</reference>
<protein>
    <recommendedName>
        <fullName>Conotoxin Cal12.1p2</fullName>
    </recommendedName>
</protein>
<comment type="subcellular location">
    <subcellularLocation>
        <location evidence="1">Secreted</location>
    </subcellularLocation>
</comment>
<comment type="tissue specificity">
    <text>Expressed by the venom duct.</text>
</comment>
<comment type="domain">
    <text>The cysteine framework is XII (C-C-C-C-CC-C-C).</text>
</comment>
<comment type="PTM">
    <text>Contains 4 disulfide bonds.</text>
</comment>
<dbReference type="EMBL" id="JF724078">
    <property type="protein sequence ID" value="AEK21698.1"/>
    <property type="molecule type" value="mRNA"/>
</dbReference>
<dbReference type="GO" id="GO:0005576">
    <property type="term" value="C:extracellular region"/>
    <property type="evidence" value="ECO:0007669"/>
    <property type="project" value="UniProtKB-SubCell"/>
</dbReference>
<dbReference type="GO" id="GO:0090729">
    <property type="term" value="F:toxin activity"/>
    <property type="evidence" value="ECO:0007669"/>
    <property type="project" value="UniProtKB-KW"/>
</dbReference>
<sequence>DLITNSYTRGKPRHVTSWRNLRTDVCKKSPGKCIHNGCFCEQDKPQGNCCDSGGCTVKWWCPGTKGD</sequence>
<proteinExistence type="evidence at transcript level"/>
<accession>G1C1T0</accession>